<dbReference type="EC" id="3.1.2.6" evidence="1"/>
<dbReference type="EMBL" id="CP000158">
    <property type="protein sequence ID" value="ABI76184.1"/>
    <property type="molecule type" value="Genomic_DNA"/>
</dbReference>
<dbReference type="RefSeq" id="WP_011648374.1">
    <property type="nucleotide sequence ID" value="NC_008358.1"/>
</dbReference>
<dbReference type="SMR" id="Q0BWR4"/>
<dbReference type="STRING" id="228405.HNE_3406"/>
<dbReference type="KEGG" id="hne:HNE_3406"/>
<dbReference type="eggNOG" id="COG0491">
    <property type="taxonomic scope" value="Bacteria"/>
</dbReference>
<dbReference type="HOGENOM" id="CLU_030571_4_1_5"/>
<dbReference type="UniPathway" id="UPA00619">
    <property type="reaction ID" value="UER00676"/>
</dbReference>
<dbReference type="Proteomes" id="UP000001959">
    <property type="component" value="Chromosome"/>
</dbReference>
<dbReference type="GO" id="GO:0004416">
    <property type="term" value="F:hydroxyacylglutathione hydrolase activity"/>
    <property type="evidence" value="ECO:0007669"/>
    <property type="project" value="UniProtKB-UniRule"/>
</dbReference>
<dbReference type="GO" id="GO:0046872">
    <property type="term" value="F:metal ion binding"/>
    <property type="evidence" value="ECO:0007669"/>
    <property type="project" value="UniProtKB-KW"/>
</dbReference>
<dbReference type="GO" id="GO:0019243">
    <property type="term" value="P:methylglyoxal catabolic process to D-lactate via S-lactoyl-glutathione"/>
    <property type="evidence" value="ECO:0007669"/>
    <property type="project" value="InterPro"/>
</dbReference>
<dbReference type="CDD" id="cd07723">
    <property type="entry name" value="hydroxyacylglutathione_hydrolase_MBL-fold"/>
    <property type="match status" value="1"/>
</dbReference>
<dbReference type="Gene3D" id="3.60.15.10">
    <property type="entry name" value="Ribonuclease Z/Hydroxyacylglutathione hydrolase-like"/>
    <property type="match status" value="1"/>
</dbReference>
<dbReference type="HAMAP" id="MF_01374">
    <property type="entry name" value="Glyoxalase_2"/>
    <property type="match status" value="1"/>
</dbReference>
<dbReference type="InterPro" id="IPR035680">
    <property type="entry name" value="Clx_II_MBL"/>
</dbReference>
<dbReference type="InterPro" id="IPR050110">
    <property type="entry name" value="Glyoxalase_II_hydrolase"/>
</dbReference>
<dbReference type="InterPro" id="IPR032282">
    <property type="entry name" value="HAGH_C"/>
</dbReference>
<dbReference type="InterPro" id="IPR017782">
    <property type="entry name" value="Hydroxyacylglutathione_Hdrlase"/>
</dbReference>
<dbReference type="InterPro" id="IPR001279">
    <property type="entry name" value="Metallo-B-lactamas"/>
</dbReference>
<dbReference type="InterPro" id="IPR036866">
    <property type="entry name" value="RibonucZ/Hydroxyglut_hydro"/>
</dbReference>
<dbReference type="NCBIfam" id="TIGR03413">
    <property type="entry name" value="GSH_gloB"/>
    <property type="match status" value="1"/>
</dbReference>
<dbReference type="PANTHER" id="PTHR43705">
    <property type="entry name" value="HYDROXYACYLGLUTATHIONE HYDROLASE"/>
    <property type="match status" value="1"/>
</dbReference>
<dbReference type="PANTHER" id="PTHR43705:SF1">
    <property type="entry name" value="HYDROXYACYLGLUTATHIONE HYDROLASE GLOB"/>
    <property type="match status" value="1"/>
</dbReference>
<dbReference type="Pfam" id="PF16123">
    <property type="entry name" value="HAGH_C"/>
    <property type="match status" value="1"/>
</dbReference>
<dbReference type="Pfam" id="PF00753">
    <property type="entry name" value="Lactamase_B"/>
    <property type="match status" value="1"/>
</dbReference>
<dbReference type="PIRSF" id="PIRSF005457">
    <property type="entry name" value="Glx"/>
    <property type="match status" value="1"/>
</dbReference>
<dbReference type="SMART" id="SM00849">
    <property type="entry name" value="Lactamase_B"/>
    <property type="match status" value="1"/>
</dbReference>
<dbReference type="SUPFAM" id="SSF56281">
    <property type="entry name" value="Metallo-hydrolase/oxidoreductase"/>
    <property type="match status" value="1"/>
</dbReference>
<organism>
    <name type="scientific">Hyphomonas neptunium (strain ATCC 15444)</name>
    <dbReference type="NCBI Taxonomy" id="228405"/>
    <lineage>
        <taxon>Bacteria</taxon>
        <taxon>Pseudomonadati</taxon>
        <taxon>Pseudomonadota</taxon>
        <taxon>Alphaproteobacteria</taxon>
        <taxon>Hyphomonadales</taxon>
        <taxon>Hyphomonadaceae</taxon>
        <taxon>Hyphomonas</taxon>
    </lineage>
</organism>
<feature type="chain" id="PRO_0000309651" description="Hydroxyacylglutathione hydrolase">
    <location>
        <begin position="1"/>
        <end position="256"/>
    </location>
</feature>
<feature type="binding site" evidence="1">
    <location>
        <position position="58"/>
    </location>
    <ligand>
        <name>Zn(2+)</name>
        <dbReference type="ChEBI" id="CHEBI:29105"/>
        <label>1</label>
    </ligand>
</feature>
<feature type="binding site" evidence="1">
    <location>
        <position position="60"/>
    </location>
    <ligand>
        <name>Zn(2+)</name>
        <dbReference type="ChEBI" id="CHEBI:29105"/>
        <label>1</label>
    </ligand>
</feature>
<feature type="binding site" evidence="1">
    <location>
        <position position="62"/>
    </location>
    <ligand>
        <name>Zn(2+)</name>
        <dbReference type="ChEBI" id="CHEBI:29105"/>
        <label>2</label>
    </ligand>
</feature>
<feature type="binding site" evidence="1">
    <location>
        <position position="63"/>
    </location>
    <ligand>
        <name>Zn(2+)</name>
        <dbReference type="ChEBI" id="CHEBI:29105"/>
        <label>2</label>
    </ligand>
</feature>
<feature type="binding site" evidence="1">
    <location>
        <position position="116"/>
    </location>
    <ligand>
        <name>Zn(2+)</name>
        <dbReference type="ChEBI" id="CHEBI:29105"/>
        <label>1</label>
    </ligand>
</feature>
<feature type="binding site" evidence="1">
    <location>
        <position position="135"/>
    </location>
    <ligand>
        <name>Zn(2+)</name>
        <dbReference type="ChEBI" id="CHEBI:29105"/>
        <label>1</label>
    </ligand>
</feature>
<feature type="binding site" evidence="1">
    <location>
        <position position="135"/>
    </location>
    <ligand>
        <name>Zn(2+)</name>
        <dbReference type="ChEBI" id="CHEBI:29105"/>
        <label>2</label>
    </ligand>
</feature>
<feature type="binding site" evidence="1">
    <location>
        <position position="173"/>
    </location>
    <ligand>
        <name>Zn(2+)</name>
        <dbReference type="ChEBI" id="CHEBI:29105"/>
        <label>2</label>
    </ligand>
</feature>
<accession>Q0BWR4</accession>
<sequence length="256" mass="28240">MSVLIEIHQFPCLNDNYGYLVHEPGSGRTIAIDTPDAAVYLAEAEKMSWTISEIWNTHWHPDHAGGNLKIKEATGCKIIGPAGEADKIPGIDRRVKGGDTVELGGATATVIDVPGHTLGHIAFHFPDQEAAFVGDAVFALGCGRVFEGTMEMMWESLKRIKKLPKKTQLYCAHEYTASNAKFAVTIEPENKALKEYVAWIEKRRAEDKPTVPALLERELETNPFLRADLPEMQLAMGHAGNAAATFGEIRGRKDRF</sequence>
<reference key="1">
    <citation type="journal article" date="2006" name="J. Bacteriol.">
        <title>Comparative genomic evidence for a close relationship between the dimorphic prosthecate bacteria Hyphomonas neptunium and Caulobacter crescentus.</title>
        <authorList>
            <person name="Badger J.H."/>
            <person name="Hoover T.R."/>
            <person name="Brun Y.V."/>
            <person name="Weiner R.M."/>
            <person name="Laub M.T."/>
            <person name="Alexandre G."/>
            <person name="Mrazek J."/>
            <person name="Ren Q."/>
            <person name="Paulsen I.T."/>
            <person name="Nelson K.E."/>
            <person name="Khouri H.M."/>
            <person name="Radune D."/>
            <person name="Sosa J."/>
            <person name="Dodson R.J."/>
            <person name="Sullivan S.A."/>
            <person name="Rosovitz M.J."/>
            <person name="Madupu R."/>
            <person name="Brinkac L.M."/>
            <person name="Durkin A.S."/>
            <person name="Daugherty S.C."/>
            <person name="Kothari S.P."/>
            <person name="Giglio M.G."/>
            <person name="Zhou L."/>
            <person name="Haft D.H."/>
            <person name="Selengut J.D."/>
            <person name="Davidsen T.M."/>
            <person name="Yang Q."/>
            <person name="Zafar N."/>
            <person name="Ward N.L."/>
        </authorList>
    </citation>
    <scope>NUCLEOTIDE SEQUENCE [LARGE SCALE GENOMIC DNA]</scope>
    <source>
        <strain>ATCC 15444</strain>
    </source>
</reference>
<proteinExistence type="inferred from homology"/>
<protein>
    <recommendedName>
        <fullName evidence="1">Hydroxyacylglutathione hydrolase</fullName>
        <ecNumber evidence="1">3.1.2.6</ecNumber>
    </recommendedName>
    <alternativeName>
        <fullName evidence="1">Glyoxalase II</fullName>
        <shortName evidence="1">Glx II</shortName>
    </alternativeName>
</protein>
<keyword id="KW-0378">Hydrolase</keyword>
<keyword id="KW-0479">Metal-binding</keyword>
<keyword id="KW-1185">Reference proteome</keyword>
<keyword id="KW-0862">Zinc</keyword>
<comment type="function">
    <text evidence="1">Thiolesterase that catalyzes the hydrolysis of S-D-lactoyl-glutathione to form glutathione and D-lactic acid.</text>
</comment>
<comment type="catalytic activity">
    <reaction evidence="1">
        <text>an S-(2-hydroxyacyl)glutathione + H2O = a 2-hydroxy carboxylate + glutathione + H(+)</text>
        <dbReference type="Rhea" id="RHEA:21864"/>
        <dbReference type="ChEBI" id="CHEBI:15377"/>
        <dbReference type="ChEBI" id="CHEBI:15378"/>
        <dbReference type="ChEBI" id="CHEBI:57925"/>
        <dbReference type="ChEBI" id="CHEBI:58896"/>
        <dbReference type="ChEBI" id="CHEBI:71261"/>
        <dbReference type="EC" id="3.1.2.6"/>
    </reaction>
</comment>
<comment type="cofactor">
    <cofactor evidence="1">
        <name>Zn(2+)</name>
        <dbReference type="ChEBI" id="CHEBI:29105"/>
    </cofactor>
    <text evidence="1">Binds 2 Zn(2+) ions per subunit.</text>
</comment>
<comment type="pathway">
    <text evidence="1">Secondary metabolite metabolism; methylglyoxal degradation; (R)-lactate from methylglyoxal: step 2/2.</text>
</comment>
<comment type="subunit">
    <text evidence="1">Monomer.</text>
</comment>
<comment type="similarity">
    <text evidence="1">Belongs to the metallo-beta-lactamase superfamily. Glyoxalase II family.</text>
</comment>
<name>GLO2_HYPNA</name>
<evidence type="ECO:0000255" key="1">
    <source>
        <dbReference type="HAMAP-Rule" id="MF_01374"/>
    </source>
</evidence>
<gene>
    <name evidence="1" type="primary">gloB</name>
    <name type="ordered locus">HNE_3406</name>
</gene>